<feature type="chain" id="PRO_0000442192" description="Archaeosine synthase">
    <location>
        <begin position="1"/>
        <end position="585"/>
    </location>
</feature>
<feature type="domain" description="PUA" evidence="2">
    <location>
        <begin position="516"/>
        <end position="584"/>
    </location>
</feature>
<keyword id="KW-1185">Reference proteome</keyword>
<keyword id="KW-0808">Transferase</keyword>
<keyword id="KW-0819">tRNA processing</keyword>
<gene>
    <name evidence="4 6" type="primary">arcS</name>
    <name evidence="4" type="synonym">tgtA2</name>
    <name evidence="6" type="ordered locus">HVO_2008</name>
</gene>
<sequence>MTDYFEVHARDGAARIGELRLSDSVTTPAVVDDVLADAGSLWAAERELPDGSDDVLTVLPHRSLPAGSADEVRESFSVAYPDVDFPSAAVVTADTADDFGADAYVLSDAQGFVGHARAFRDNVIEAKENLPADTALVLSGVATPRNVSLLVYAGVDLVDEKLARARGLEGFYLTSDGEYFLEDLDELPCACEACRKPASEFTRADAADHNANALRAELARVRRRVRDGRLRDYVEGQARHDQWLTALFRRFDQQYSFMEQRVPVIRDSELTAASEESIDRVEIQRFADRVTKRYRNRFDNPLVLLPCSAKKPYSESQSHRQFQEAVQYRAHMVSMTSPIGVVPQELELTYPAQHYDSVVTGDWSEDEKSFVAEVLRRYLERNDYPRIIAHLPPGAYTDIVERVADDLDLDVEFTVSEHPTTTESIGNLMRTLDGEPKFTREEREHNVVKALADYQLGPDAGDALFSDVALEMTSRYPKLQVWNDAGVQLATMVPQYGVLSFTLEGAKVWRDSDAPTKTVEIDGFVPHGSVLAPGVVDADEDIRPGDEVVVEGPKAFAIGRAEMGGRELVESTRGIGVEIRHVEER</sequence>
<accession>D4GTN6</accession>
<evidence type="ECO:0000250" key="1">
    <source>
        <dbReference type="UniProtKB" id="Q58428"/>
    </source>
</evidence>
<evidence type="ECO:0000255" key="2">
    <source>
        <dbReference type="PROSITE-ProRule" id="PRU00161"/>
    </source>
</evidence>
<evidence type="ECO:0000269" key="3">
    <source>
    </source>
</evidence>
<evidence type="ECO:0000303" key="4">
    <source>
    </source>
</evidence>
<evidence type="ECO:0000305" key="5"/>
<evidence type="ECO:0000312" key="6">
    <source>
        <dbReference type="EMBL" id="ADE04890.1"/>
    </source>
</evidence>
<dbReference type="EC" id="2.6.1.97" evidence="1"/>
<dbReference type="EMBL" id="CP001956">
    <property type="protein sequence ID" value="ADE04890.1"/>
    <property type="molecule type" value="Genomic_DNA"/>
</dbReference>
<dbReference type="RefSeq" id="WP_004041892.1">
    <property type="nucleotide sequence ID" value="NC_013967.1"/>
</dbReference>
<dbReference type="SMR" id="D4GTN6"/>
<dbReference type="STRING" id="309800.HVO_2008"/>
<dbReference type="PaxDb" id="309800-C498_05321"/>
<dbReference type="EnsemblBacteria" id="ADE04890">
    <property type="protein sequence ID" value="ADE04890"/>
    <property type="gene ID" value="HVO_2008"/>
</dbReference>
<dbReference type="GeneID" id="8924122"/>
<dbReference type="KEGG" id="hvo:HVO_2008"/>
<dbReference type="PATRIC" id="fig|309800.29.peg.1037"/>
<dbReference type="eggNOG" id="arCOG00989">
    <property type="taxonomic scope" value="Archaea"/>
</dbReference>
<dbReference type="eggNOG" id="arCOG00990">
    <property type="taxonomic scope" value="Archaea"/>
</dbReference>
<dbReference type="HOGENOM" id="CLU_029831_0_0_2"/>
<dbReference type="OrthoDB" id="115061at2157"/>
<dbReference type="UniPathway" id="UPA00393"/>
<dbReference type="Proteomes" id="UP000008243">
    <property type="component" value="Chromosome"/>
</dbReference>
<dbReference type="GO" id="GO:0005737">
    <property type="term" value="C:cytoplasm"/>
    <property type="evidence" value="ECO:0007669"/>
    <property type="project" value="TreeGrafter"/>
</dbReference>
<dbReference type="GO" id="GO:0002948">
    <property type="term" value="F:archaeosine synthase activity"/>
    <property type="evidence" value="ECO:0007669"/>
    <property type="project" value="UniProtKB-EC"/>
</dbReference>
<dbReference type="GO" id="GO:0003723">
    <property type="term" value="F:RNA binding"/>
    <property type="evidence" value="ECO:0007669"/>
    <property type="project" value="InterPro"/>
</dbReference>
<dbReference type="GO" id="GO:0002099">
    <property type="term" value="P:tRNA wobble guanine modification"/>
    <property type="evidence" value="ECO:0007669"/>
    <property type="project" value="TreeGrafter"/>
</dbReference>
<dbReference type="CDD" id="cd21149">
    <property type="entry name" value="PUA_archaeosine_TGT"/>
    <property type="match status" value="1"/>
</dbReference>
<dbReference type="Gene3D" id="3.10.450.90">
    <property type="entry name" value="ArcTGT, C2 domain"/>
    <property type="match status" value="1"/>
</dbReference>
<dbReference type="Gene3D" id="2.30.130.10">
    <property type="entry name" value="PUA domain"/>
    <property type="match status" value="1"/>
</dbReference>
<dbReference type="Gene3D" id="3.20.20.105">
    <property type="entry name" value="Queuine tRNA-ribosyltransferase-like"/>
    <property type="match status" value="1"/>
</dbReference>
<dbReference type="Gene3D" id="3.40.50.10630">
    <property type="entry name" value="Uracil-DNA glycosylase-like"/>
    <property type="match status" value="1"/>
</dbReference>
<dbReference type="InterPro" id="IPR053418">
    <property type="entry name" value="Archaeosine_synthase_1"/>
</dbReference>
<dbReference type="InterPro" id="IPR050076">
    <property type="entry name" value="ArchSynthase1/Queuine_TRR"/>
</dbReference>
<dbReference type="InterPro" id="IPR040777">
    <property type="entry name" value="DUF5591"/>
</dbReference>
<dbReference type="InterPro" id="IPR002478">
    <property type="entry name" value="PUA"/>
</dbReference>
<dbReference type="InterPro" id="IPR015947">
    <property type="entry name" value="PUA-like_sf"/>
</dbReference>
<dbReference type="InterPro" id="IPR036974">
    <property type="entry name" value="PUA_sf"/>
</dbReference>
<dbReference type="InterPro" id="IPR036511">
    <property type="entry name" value="TGT-like_sf"/>
</dbReference>
<dbReference type="InterPro" id="IPR029402">
    <property type="entry name" value="TGT_C2"/>
</dbReference>
<dbReference type="InterPro" id="IPR038250">
    <property type="entry name" value="TGT_C2_sf"/>
</dbReference>
<dbReference type="InterPro" id="IPR002616">
    <property type="entry name" value="tRNA_ribo_trans-like"/>
</dbReference>
<dbReference type="InterPro" id="IPR004521">
    <property type="entry name" value="Uncharacterised_CHP00451"/>
</dbReference>
<dbReference type="InterPro" id="IPR036895">
    <property type="entry name" value="Uracil-DNA_glycosylase-like_sf"/>
</dbReference>
<dbReference type="NCBIfam" id="NF040592">
    <property type="entry name" value="tRNA_mod_ArcS"/>
    <property type="match status" value="1"/>
</dbReference>
<dbReference type="NCBIfam" id="TIGR00451">
    <property type="entry name" value="unchar_dom_2"/>
    <property type="match status" value="1"/>
</dbReference>
<dbReference type="PANTHER" id="PTHR46499:SF2">
    <property type="entry name" value="ARCHAEOSINE SYNTHASE"/>
    <property type="match status" value="1"/>
</dbReference>
<dbReference type="PANTHER" id="PTHR46499">
    <property type="entry name" value="QUEUINE TRNA-RIBOSYLTRANSFERASE"/>
    <property type="match status" value="1"/>
</dbReference>
<dbReference type="Pfam" id="PF17884">
    <property type="entry name" value="DUF5591"/>
    <property type="match status" value="1"/>
</dbReference>
<dbReference type="Pfam" id="PF01472">
    <property type="entry name" value="PUA"/>
    <property type="match status" value="1"/>
</dbReference>
<dbReference type="Pfam" id="PF01702">
    <property type="entry name" value="TGT"/>
    <property type="match status" value="1"/>
</dbReference>
<dbReference type="Pfam" id="PF14810">
    <property type="entry name" value="TGT_C2"/>
    <property type="match status" value="1"/>
</dbReference>
<dbReference type="SMART" id="SM00359">
    <property type="entry name" value="PUA"/>
    <property type="match status" value="1"/>
</dbReference>
<dbReference type="SUPFAM" id="SSF88802">
    <property type="entry name" value="Pre-PUA domain"/>
    <property type="match status" value="1"/>
</dbReference>
<dbReference type="SUPFAM" id="SSF88697">
    <property type="entry name" value="PUA domain-like"/>
    <property type="match status" value="1"/>
</dbReference>
<dbReference type="SUPFAM" id="SSF51713">
    <property type="entry name" value="tRNA-guanine transglycosylase"/>
    <property type="match status" value="1"/>
</dbReference>
<dbReference type="SUPFAM" id="SSF52141">
    <property type="entry name" value="Uracil-DNA glycosylase-like"/>
    <property type="match status" value="1"/>
</dbReference>
<dbReference type="PROSITE" id="PS50890">
    <property type="entry name" value="PUA"/>
    <property type="match status" value="1"/>
</dbReference>
<comment type="function">
    <text evidence="3">Is responsible for the final step in the biosynthesis of archaeosine, a modified nucleoside present in the dihydrouridine loop (D-loop) of archaeal tRNA. Catalyzes the conversion of 7-cyano-7-deazaguanine (preQ0)-modified tRNA to archaeosine-tRNA, transforming a nitrile group to a formamidine group.</text>
</comment>
<comment type="catalytic activity">
    <reaction evidence="1">
        <text>7-cyano-7-carbaguanosine(15) in tRNA + L-glutamine + H2O = archaeosine(15) in tRNA + L-glutamate</text>
        <dbReference type="Rhea" id="RHEA:54084"/>
        <dbReference type="Rhea" id="RHEA-COMP:10371"/>
        <dbReference type="Rhea" id="RHEA-COMP:14170"/>
        <dbReference type="ChEBI" id="CHEBI:15377"/>
        <dbReference type="ChEBI" id="CHEBI:29985"/>
        <dbReference type="ChEBI" id="CHEBI:58359"/>
        <dbReference type="ChEBI" id="CHEBI:82850"/>
        <dbReference type="ChEBI" id="CHEBI:138803"/>
        <dbReference type="EC" id="2.6.1.97"/>
    </reaction>
</comment>
<comment type="pathway">
    <text evidence="3">tRNA modification; archaeosine-tRNA biosynthesis.</text>
</comment>
<comment type="subunit">
    <text evidence="1">Homodimer.</text>
</comment>
<comment type="disruption phenotype">
    <text evidence="3">Cells lacking this gene lack archaeosine in tRNA and accumulate preQ0-modified tRNA.</text>
</comment>
<comment type="similarity">
    <text evidence="5">Belongs to the archaeosine synthase type 1 family.</text>
</comment>
<proteinExistence type="inferred from homology"/>
<organism>
    <name type="scientific">Haloferax volcanii (strain ATCC 29605 / DSM 3757 / JCM 8879 / NBRC 14742 / NCIMB 2012 / VKM B-1768 / DS2)</name>
    <name type="common">Halobacterium volcanii</name>
    <dbReference type="NCBI Taxonomy" id="309800"/>
    <lineage>
        <taxon>Archaea</taxon>
        <taxon>Methanobacteriati</taxon>
        <taxon>Methanobacteriota</taxon>
        <taxon>Stenosarchaea group</taxon>
        <taxon>Halobacteria</taxon>
        <taxon>Halobacteriales</taxon>
        <taxon>Haloferacaceae</taxon>
        <taxon>Haloferax</taxon>
    </lineage>
</organism>
<reference key="1">
    <citation type="journal article" date="2010" name="PLoS ONE">
        <title>The complete genome sequence of Haloferax volcanii DS2, a model archaeon.</title>
        <authorList>
            <person name="Hartman A.L."/>
            <person name="Norais C."/>
            <person name="Badger J.H."/>
            <person name="Delmas S."/>
            <person name="Haldenby S."/>
            <person name="Madupu R."/>
            <person name="Robinson J."/>
            <person name="Khouri H."/>
            <person name="Ren Q."/>
            <person name="Lowe T.M."/>
            <person name="Maupin-Furlow J."/>
            <person name="Pohlschroder M."/>
            <person name="Daniels C."/>
            <person name="Pfeiffer F."/>
            <person name="Allers T."/>
            <person name="Eisen J.A."/>
        </authorList>
    </citation>
    <scope>NUCLEOTIDE SEQUENCE [LARGE SCALE GENOMIC DNA]</scope>
    <source>
        <strain>ATCC 29605 / DSM 3757 / JCM 8879 / NBRC 14742 / NCIMB 2012 / VKM B-1768 / DS2</strain>
    </source>
</reference>
<reference key="2">
    <citation type="journal article" date="2010" name="J. Biol. Chem.">
        <title>Discovery and characterization of an amidinotransferase involved in the modification of archaeal tRNA.</title>
        <authorList>
            <person name="Phillips G."/>
            <person name="Chikwana V.M."/>
            <person name="Maxwell A."/>
            <person name="El-Yacoubi B."/>
            <person name="Swairjo M.A."/>
            <person name="Iwata-Reuyl D."/>
            <person name="de Crecy-Lagard V."/>
        </authorList>
    </citation>
    <scope>FUNCTION</scope>
    <scope>PATHWAY</scope>
    <scope>DISRUPTION PHENOTYPE</scope>
    <source>
        <strain>DS2 / DS70</strain>
    </source>
</reference>
<name>ARCS_HALVD</name>
<protein>
    <recommendedName>
        <fullName evidence="4">Archaeosine synthase</fullName>
        <ecNumber evidence="1">2.6.1.97</ecNumber>
    </recommendedName>
    <alternativeName>
        <fullName evidence="4">Glutamine:preQ0-tRNA amidinotransferase</fullName>
    </alternativeName>
</protein>